<sequence length="284" mass="33060">MNVFQMRDKLKARLKHLDVEFKFDREEETLRIVRIDNHKGVTIKLNAIVAKYEEQKEKIIDEICYYVEEAIAQMGDEVINNVEDIQIMPVIRATSFDKETKEGHAFVLTEHTAETNIYYALDLGKSYRLIDENMLQTLNLTAQQVKEMSLFNVRKLECRYSTDEVKGNIFYFINTNDGYDASRILNTSFLNHIQHQCEGEMLVGVPHQDVLILADIRNKTGYDVMAHLTMEFFTKGLVPITSLSFGYDNGHLEPIFILGKNNKQKRDPNVIQRLEANRKKFKKD</sequence>
<proteinExistence type="inferred from homology"/>
<accession>Q5HNG6</accession>
<reference key="1">
    <citation type="journal article" date="2005" name="J. Bacteriol.">
        <title>Insights on evolution of virulence and resistance from the complete genome analysis of an early methicillin-resistant Staphylococcus aureus strain and a biofilm-producing methicillin-resistant Staphylococcus epidermidis strain.</title>
        <authorList>
            <person name="Gill S.R."/>
            <person name="Fouts D.E."/>
            <person name="Archer G.L."/>
            <person name="Mongodin E.F."/>
            <person name="DeBoy R.T."/>
            <person name="Ravel J."/>
            <person name="Paulsen I.T."/>
            <person name="Kolonay J.F."/>
            <person name="Brinkac L.M."/>
            <person name="Beanan M.J."/>
            <person name="Dodson R.J."/>
            <person name="Daugherty S.C."/>
            <person name="Madupu R."/>
            <person name="Angiuoli S.V."/>
            <person name="Durkin A.S."/>
            <person name="Haft D.H."/>
            <person name="Vamathevan J.J."/>
            <person name="Khouri H."/>
            <person name="Utterback T.R."/>
            <person name="Lee C."/>
            <person name="Dimitrov G."/>
            <person name="Jiang L."/>
            <person name="Qin H."/>
            <person name="Weidman J."/>
            <person name="Tran K."/>
            <person name="Kang K.H."/>
            <person name="Hance I.R."/>
            <person name="Nelson K.E."/>
            <person name="Fraser C.M."/>
        </authorList>
    </citation>
    <scope>NUCLEOTIDE SEQUENCE [LARGE SCALE GENOMIC DNA]</scope>
    <source>
        <strain>ATCC 35984 / DSM 28319 / BCRC 17069 / CCUG 31568 / BM 3577 / RP62A</strain>
    </source>
</reference>
<feature type="chain" id="PRO_0000171114" description="UPF0354 protein SERP1303">
    <location>
        <begin position="1"/>
        <end position="284"/>
    </location>
</feature>
<name>Y1303_STAEQ</name>
<protein>
    <recommendedName>
        <fullName evidence="1">UPF0354 protein SERP1303</fullName>
    </recommendedName>
</protein>
<gene>
    <name type="ordered locus">SERP1303</name>
</gene>
<dbReference type="EMBL" id="CP000029">
    <property type="protein sequence ID" value="AAW54623.1"/>
    <property type="molecule type" value="Genomic_DNA"/>
</dbReference>
<dbReference type="RefSeq" id="WP_001832670.1">
    <property type="nucleotide sequence ID" value="NC_002976.3"/>
</dbReference>
<dbReference type="STRING" id="176279.SERP1303"/>
<dbReference type="KEGG" id="ser:SERP1303"/>
<dbReference type="eggNOG" id="COG4848">
    <property type="taxonomic scope" value="Bacteria"/>
</dbReference>
<dbReference type="HOGENOM" id="CLU_085634_0_0_9"/>
<dbReference type="Proteomes" id="UP000000531">
    <property type="component" value="Chromosome"/>
</dbReference>
<dbReference type="HAMAP" id="MF_01548">
    <property type="entry name" value="UPF0354"/>
    <property type="match status" value="1"/>
</dbReference>
<dbReference type="InterPro" id="IPR010838">
    <property type="entry name" value="DUF1444"/>
</dbReference>
<dbReference type="NCBIfam" id="NF010189">
    <property type="entry name" value="PRK13668.1"/>
    <property type="match status" value="1"/>
</dbReference>
<dbReference type="Pfam" id="PF07285">
    <property type="entry name" value="DUF1444"/>
    <property type="match status" value="1"/>
</dbReference>
<dbReference type="PIRSF" id="PIRSF012562">
    <property type="entry name" value="UCP012562"/>
    <property type="match status" value="1"/>
</dbReference>
<comment type="similarity">
    <text evidence="1">Belongs to the UPF0354 family.</text>
</comment>
<organism>
    <name type="scientific">Staphylococcus epidermidis (strain ATCC 35984 / DSM 28319 / BCRC 17069 / CCUG 31568 / BM 3577 / RP62A)</name>
    <dbReference type="NCBI Taxonomy" id="176279"/>
    <lineage>
        <taxon>Bacteria</taxon>
        <taxon>Bacillati</taxon>
        <taxon>Bacillota</taxon>
        <taxon>Bacilli</taxon>
        <taxon>Bacillales</taxon>
        <taxon>Staphylococcaceae</taxon>
        <taxon>Staphylococcus</taxon>
    </lineage>
</organism>
<keyword id="KW-1185">Reference proteome</keyword>
<evidence type="ECO:0000255" key="1">
    <source>
        <dbReference type="HAMAP-Rule" id="MF_01548"/>
    </source>
</evidence>